<keyword id="KW-0963">Cytoplasm</keyword>
<keyword id="KW-0962">Peroxisome biogenesis</keyword>
<keyword id="KW-1185">Reference proteome</keyword>
<protein>
    <recommendedName>
        <fullName>Peroxisome biogenesis factor 16</fullName>
    </recommendedName>
    <alternativeName>
        <fullName>Peroxin-16</fullName>
    </alternativeName>
</protein>
<reference key="1">
    <citation type="journal article" date="2002" name="Nature">
        <title>Sequence and analysis of chromosome 2 of Dictyostelium discoideum.</title>
        <authorList>
            <person name="Gloeckner G."/>
            <person name="Eichinger L."/>
            <person name="Szafranski K."/>
            <person name="Pachebat J.A."/>
            <person name="Bankier A.T."/>
            <person name="Dear P.H."/>
            <person name="Lehmann R."/>
            <person name="Baumgart C."/>
            <person name="Parra G."/>
            <person name="Abril J.F."/>
            <person name="Guigo R."/>
            <person name="Kumpf K."/>
            <person name="Tunggal B."/>
            <person name="Cox E.C."/>
            <person name="Quail M.A."/>
            <person name="Platzer M."/>
            <person name="Rosenthal A."/>
            <person name="Noegel A.A."/>
        </authorList>
    </citation>
    <scope>NUCLEOTIDE SEQUENCE [LARGE SCALE GENOMIC DNA]</scope>
    <source>
        <strain>AX4</strain>
    </source>
</reference>
<reference key="2">
    <citation type="journal article" date="2005" name="Nature">
        <title>The genome of the social amoeba Dictyostelium discoideum.</title>
        <authorList>
            <person name="Eichinger L."/>
            <person name="Pachebat J.A."/>
            <person name="Gloeckner G."/>
            <person name="Rajandream M.A."/>
            <person name="Sucgang R."/>
            <person name="Berriman M."/>
            <person name="Song J."/>
            <person name="Olsen R."/>
            <person name="Szafranski K."/>
            <person name="Xu Q."/>
            <person name="Tunggal B."/>
            <person name="Kummerfeld S."/>
            <person name="Madera M."/>
            <person name="Konfortov B.A."/>
            <person name="Rivero F."/>
            <person name="Bankier A.T."/>
            <person name="Lehmann R."/>
            <person name="Hamlin N."/>
            <person name="Davies R."/>
            <person name="Gaudet P."/>
            <person name="Fey P."/>
            <person name="Pilcher K."/>
            <person name="Chen G."/>
            <person name="Saunders D."/>
            <person name="Sodergren E.J."/>
            <person name="Davis P."/>
            <person name="Kerhornou A."/>
            <person name="Nie X."/>
            <person name="Hall N."/>
            <person name="Anjard C."/>
            <person name="Hemphill L."/>
            <person name="Bason N."/>
            <person name="Farbrother P."/>
            <person name="Desany B."/>
            <person name="Just E."/>
            <person name="Morio T."/>
            <person name="Rost R."/>
            <person name="Churcher C.M."/>
            <person name="Cooper J."/>
            <person name="Haydock S."/>
            <person name="van Driessche N."/>
            <person name="Cronin A."/>
            <person name="Goodhead I."/>
            <person name="Muzny D.M."/>
            <person name="Mourier T."/>
            <person name="Pain A."/>
            <person name="Lu M."/>
            <person name="Harper D."/>
            <person name="Lindsay R."/>
            <person name="Hauser H."/>
            <person name="James K.D."/>
            <person name="Quiles M."/>
            <person name="Madan Babu M."/>
            <person name="Saito T."/>
            <person name="Buchrieser C."/>
            <person name="Wardroper A."/>
            <person name="Felder M."/>
            <person name="Thangavelu M."/>
            <person name="Johnson D."/>
            <person name="Knights A."/>
            <person name="Loulseged H."/>
            <person name="Mungall K.L."/>
            <person name="Oliver K."/>
            <person name="Price C."/>
            <person name="Quail M.A."/>
            <person name="Urushihara H."/>
            <person name="Hernandez J."/>
            <person name="Rabbinowitsch E."/>
            <person name="Steffen D."/>
            <person name="Sanders M."/>
            <person name="Ma J."/>
            <person name="Kohara Y."/>
            <person name="Sharp S."/>
            <person name="Simmonds M.N."/>
            <person name="Spiegler S."/>
            <person name="Tivey A."/>
            <person name="Sugano S."/>
            <person name="White B."/>
            <person name="Walker D."/>
            <person name="Woodward J.R."/>
            <person name="Winckler T."/>
            <person name="Tanaka Y."/>
            <person name="Shaulsky G."/>
            <person name="Schleicher M."/>
            <person name="Weinstock G.M."/>
            <person name="Rosenthal A."/>
            <person name="Cox E.C."/>
            <person name="Chisholm R.L."/>
            <person name="Gibbs R.A."/>
            <person name="Loomis W.F."/>
            <person name="Platzer M."/>
            <person name="Kay R.R."/>
            <person name="Williams J.G."/>
            <person name="Dear P.H."/>
            <person name="Noegel A.A."/>
            <person name="Barrell B.G."/>
            <person name="Kuspa A."/>
        </authorList>
    </citation>
    <scope>NUCLEOTIDE SEQUENCE [LARGE SCALE GENOMIC DNA]</scope>
    <source>
        <strain>AX4</strain>
    </source>
</reference>
<sequence>MIPKQPKSNILIFLLENSDHLGLLKSLITFLPGRYGDSELFSEGLYSVANILQSYLDYRSSGILLSNNIDKISNGEKVPPPYYLTTLRWITTVQSLELFFEMLATKKGEQHDDSNSNNNNSNNNIKKMIIFIIELLKAILRLKLLIKTNGDMLVHHSFYVPSKDVKTILENNRNQQKQFQNKRPAVTMSINNNNNINNNDNNNINNNNNTNDDNFNNNNNNNNNRRTLSDQIFEQQRIVNQENNLLYQQQRELQQNESTLIKLLPPPPPKDYNTKTIGEILFIFRPVIYWVSYCIFGKKSWKPWFLSLVTELLSKSFSEYGNFKQKIRLTLLEAKELNRRKKLLFFYLIRSPFYEKFIGDGLLNKFLNFLKKIHIFKTLIDILINYLNVYRTRYFYTSAS</sequence>
<comment type="function">
    <text evidence="1">Required for peroxisome membrane biogenesis.</text>
</comment>
<comment type="subcellular location">
    <subcellularLocation>
        <location evidence="1">Cytoplasm</location>
    </subcellularLocation>
</comment>
<comment type="similarity">
    <text evidence="3">Belongs to the peroxin-16 family.</text>
</comment>
<proteinExistence type="inferred from homology"/>
<dbReference type="EMBL" id="AAFI02000019">
    <property type="protein sequence ID" value="EAL69058.2"/>
    <property type="molecule type" value="Genomic_DNA"/>
</dbReference>
<dbReference type="RefSeq" id="XP_642972.2">
    <property type="nucleotide sequence ID" value="XM_637880.2"/>
</dbReference>
<dbReference type="FunCoup" id="Q550G0">
    <property type="interactions" value="56"/>
</dbReference>
<dbReference type="STRING" id="44689.Q550G0"/>
<dbReference type="PaxDb" id="44689-DDB0238079"/>
<dbReference type="EnsemblProtists" id="EAL69058">
    <property type="protein sequence ID" value="EAL69058"/>
    <property type="gene ID" value="DDB_G0277113"/>
</dbReference>
<dbReference type="GeneID" id="8620844"/>
<dbReference type="KEGG" id="ddi:DDB_G0277113"/>
<dbReference type="dictyBase" id="DDB_G0277113">
    <property type="gene designation" value="pex16"/>
</dbReference>
<dbReference type="VEuPathDB" id="AmoebaDB:DDB_G0277113"/>
<dbReference type="eggNOG" id="KOG4546">
    <property type="taxonomic scope" value="Eukaryota"/>
</dbReference>
<dbReference type="HOGENOM" id="CLU_036533_2_0_1"/>
<dbReference type="InParanoid" id="Q550G0"/>
<dbReference type="OMA" id="PTWQSTY"/>
<dbReference type="Reactome" id="R-DDI-9603798">
    <property type="pathway name" value="Class I peroxisomal membrane protein import"/>
</dbReference>
<dbReference type="PRO" id="PR:Q550G0"/>
<dbReference type="Proteomes" id="UP000002195">
    <property type="component" value="Chromosome 2"/>
</dbReference>
<dbReference type="GO" id="GO:0005778">
    <property type="term" value="C:peroxisomal membrane"/>
    <property type="evidence" value="ECO:0000318"/>
    <property type="project" value="GO_Central"/>
</dbReference>
<dbReference type="GO" id="GO:0005777">
    <property type="term" value="C:peroxisome"/>
    <property type="evidence" value="ECO:0000250"/>
    <property type="project" value="dictyBase"/>
</dbReference>
<dbReference type="GO" id="GO:0007031">
    <property type="term" value="P:peroxisome organization"/>
    <property type="evidence" value="ECO:0000250"/>
    <property type="project" value="dictyBase"/>
</dbReference>
<dbReference type="InterPro" id="IPR013919">
    <property type="entry name" value="Pex16"/>
</dbReference>
<dbReference type="PANTHER" id="PTHR13299">
    <property type="entry name" value="PEROXISOMAL MEMBRANE PROTEIN PEX16"/>
    <property type="match status" value="1"/>
</dbReference>
<dbReference type="PANTHER" id="PTHR13299:SF0">
    <property type="entry name" value="PEROXISOMAL MEMBRANE PROTEIN PEX16"/>
    <property type="match status" value="1"/>
</dbReference>
<dbReference type="Pfam" id="PF08610">
    <property type="entry name" value="Pex16"/>
    <property type="match status" value="1"/>
</dbReference>
<evidence type="ECO:0000250" key="1"/>
<evidence type="ECO:0000256" key="2">
    <source>
        <dbReference type="SAM" id="MobiDB-lite"/>
    </source>
</evidence>
<evidence type="ECO:0000305" key="3"/>
<gene>
    <name type="primary">pex16</name>
    <name type="ORF">DDB_G0277113</name>
</gene>
<feature type="chain" id="PRO_0000371408" description="Peroxisome biogenesis factor 16">
    <location>
        <begin position="1"/>
        <end position="400"/>
    </location>
</feature>
<feature type="region of interest" description="Disordered" evidence="2">
    <location>
        <begin position="176"/>
        <end position="226"/>
    </location>
</feature>
<feature type="compositionally biased region" description="Low complexity" evidence="2">
    <location>
        <begin position="190"/>
        <end position="224"/>
    </location>
</feature>
<organism>
    <name type="scientific">Dictyostelium discoideum</name>
    <name type="common">Social amoeba</name>
    <dbReference type="NCBI Taxonomy" id="44689"/>
    <lineage>
        <taxon>Eukaryota</taxon>
        <taxon>Amoebozoa</taxon>
        <taxon>Evosea</taxon>
        <taxon>Eumycetozoa</taxon>
        <taxon>Dictyostelia</taxon>
        <taxon>Dictyosteliales</taxon>
        <taxon>Dictyosteliaceae</taxon>
        <taxon>Dictyostelium</taxon>
    </lineage>
</organism>
<accession>Q550G0</accession>
<accession>Q869V2</accession>
<name>PEX16_DICDI</name>